<organism>
    <name type="scientific">Didelphis virginiana</name>
    <name type="common">North American opossum</name>
    <name type="synonym">Didelphis marsupialis virginiana</name>
    <dbReference type="NCBI Taxonomy" id="9267"/>
    <lineage>
        <taxon>Eukaryota</taxon>
        <taxon>Metazoa</taxon>
        <taxon>Chordata</taxon>
        <taxon>Craniata</taxon>
        <taxon>Vertebrata</taxon>
        <taxon>Euteleostomi</taxon>
        <taxon>Mammalia</taxon>
        <taxon>Metatheria</taxon>
        <taxon>Didelphimorphia</taxon>
        <taxon>Didelphidae</taxon>
        <taxon>Didelphis</taxon>
    </lineage>
</organism>
<sequence>MGLETEKADAQIYMDEDSYSRHSGLGYPEPEKCAKSTQDRDPRGLNTHLKMGFEDVIGEPESTHSFDKVWICSHALFEVSKYLIYKVLTVLLAIPLAFVAGILFATLSCLHIWIVVPFVKTCLMVLPSVQTVWHSITDGFIAPLYKSMGLIFSSISLRLSPE</sequence>
<comment type="function">
    <text evidence="1">May act as a scaffolding protein within caveolar membranes. Interacts directly with G-protein alpha subunits and can functionally regulate their activity. Acts as an accessory protein in conjunction with CAV1 in targeting to lipid rafts and driving caveolae formation. The Ser-36 phosphorylated form has a role in modulating mitosis in endothelial cells. Positive regulator of cellular mitogenesis of the MAPK signaling pathway. Required for the insulin-stimulated nuclear translocation and activation of MAPK1 and STAT3, and the subsequent regulation of cell cycle progression (By similarity).</text>
</comment>
<comment type="subunit">
    <text evidence="1">Monomer or homodimer (By similarity). Interacts with CAV1; the interaction forms a stable heterooligomeric complex that is required for targeting to lipid rafts and for caveolae formation. Tyrosine phosphorylated forms do not form heterooligomers with the Tyr-19-phosphorylated form existing as a monomer or dimer, and the Tyr-27-form as a monomer only. Interacts (tyrosine phosphorylated form) with the SH2 domain-containing proteins, RASA1, NCK1 and SRC. Interacts (tyrosine phosphorylated form) with INSR, the interaction (Tyr-27-phosphorylated form) is increased on insulin stimulation. Interacts (Tyr-19 phosphorylated form) with MAPK1 (phosphorylated form); the interaction, promoted by insulin, leads to nuclear location and MAPK1 activation. Interacts with STAT3; the interaction is increased on insulin-induced tyrosine phosphorylation leading to STAT activation (By similarity).</text>
</comment>
<comment type="subcellular location">
    <subcellularLocation>
        <location evidence="1">Nucleus</location>
    </subcellularLocation>
    <subcellularLocation>
        <location evidence="1">Cytoplasm</location>
    </subcellularLocation>
    <subcellularLocation>
        <location>Golgi apparatus membrane</location>
        <topology>Peripheral membrane protein</topology>
    </subcellularLocation>
    <subcellularLocation>
        <location>Cell membrane</location>
        <topology>Peripheral membrane protein</topology>
    </subcellularLocation>
    <subcellularLocation>
        <location>Membrane</location>
        <location>Caveola</location>
        <topology>Peripheral membrane protein</topology>
    </subcellularLocation>
    <text evidence="1">Potential hairpin-like structure in the membrane. Membrane protein of caveolae. Tyr-19-phosphorylated form is enriched at sites of cell-cell contact and is translocated to the nucleus in complex with MAPK1 in response to insulin (By similarity). Tyr-27-phosphorylated form is located both in the cytoplasm and plasma membrane. CAV1-mediated Ser-23-phosphorylated form locates to the plasma membrane. Ser-36-phosphorylated form resides in intracellular compartments.</text>
</comment>
<comment type="PTM">
    <text evidence="1">Phosphorylated on serine and tyrosine residues. CAV1 promotes phosphorylation on Ser-23 which then targets the complex to the plasma membrane, lipid rafts and caveolae. Phosphorylation on Ser-36 appears to modulate mitosis in endothelial cells (By similarity). Phosphorylation on both Tyr-19 and Tyr-27 is required for insulin-induced 'Ser-727' phosphorylation of STAT3 and its activation. Phosphorylation on Tyr-19 is required for insulin-induced phosphorylation of MAPK1 and DNA binding of STAT3. Tyrosine phosphorylation is induced by both EGF and insulin (By. similarity).</text>
</comment>
<comment type="similarity">
    <text evidence="6">Belongs to the caveolin family.</text>
</comment>
<dbReference type="EMBL" id="DP000023">
    <property type="protein sequence ID" value="ABB89829.1"/>
    <property type="molecule type" value="Genomic_DNA"/>
</dbReference>
<dbReference type="SMR" id="Q2QL80"/>
<dbReference type="GO" id="GO:0005901">
    <property type="term" value="C:caveola"/>
    <property type="evidence" value="ECO:0000250"/>
    <property type="project" value="UniProtKB"/>
</dbReference>
<dbReference type="GO" id="GO:0031410">
    <property type="term" value="C:cytoplasmic vesicle"/>
    <property type="evidence" value="ECO:0007669"/>
    <property type="project" value="TreeGrafter"/>
</dbReference>
<dbReference type="GO" id="GO:0005925">
    <property type="term" value="C:focal adhesion"/>
    <property type="evidence" value="ECO:0007669"/>
    <property type="project" value="TreeGrafter"/>
</dbReference>
<dbReference type="GO" id="GO:0000139">
    <property type="term" value="C:Golgi membrane"/>
    <property type="evidence" value="ECO:0007669"/>
    <property type="project" value="UniProtKB-SubCell"/>
</dbReference>
<dbReference type="GO" id="GO:0005634">
    <property type="term" value="C:nucleus"/>
    <property type="evidence" value="ECO:0007669"/>
    <property type="project" value="UniProtKB-SubCell"/>
</dbReference>
<dbReference type="GO" id="GO:0048471">
    <property type="term" value="C:perinuclear region of cytoplasm"/>
    <property type="evidence" value="ECO:0000250"/>
    <property type="project" value="UniProtKB"/>
</dbReference>
<dbReference type="GO" id="GO:0044853">
    <property type="term" value="C:plasma membrane raft"/>
    <property type="evidence" value="ECO:0000250"/>
    <property type="project" value="UniProtKB"/>
</dbReference>
<dbReference type="GO" id="GO:0042383">
    <property type="term" value="C:sarcolemma"/>
    <property type="evidence" value="ECO:0007669"/>
    <property type="project" value="TreeGrafter"/>
</dbReference>
<dbReference type="GO" id="GO:0031748">
    <property type="term" value="F:D1 dopamine receptor binding"/>
    <property type="evidence" value="ECO:0000250"/>
    <property type="project" value="UniProtKB"/>
</dbReference>
<dbReference type="GO" id="GO:0060090">
    <property type="term" value="F:molecular adaptor activity"/>
    <property type="evidence" value="ECO:0007669"/>
    <property type="project" value="TreeGrafter"/>
</dbReference>
<dbReference type="GO" id="GO:0019901">
    <property type="term" value="F:protein kinase binding"/>
    <property type="evidence" value="ECO:0007669"/>
    <property type="project" value="TreeGrafter"/>
</dbReference>
<dbReference type="GO" id="GO:0070836">
    <property type="term" value="P:caveola assembly"/>
    <property type="evidence" value="ECO:0000250"/>
    <property type="project" value="UniProtKB"/>
</dbReference>
<dbReference type="GO" id="GO:0007029">
    <property type="term" value="P:endoplasmic reticulum organization"/>
    <property type="evidence" value="ECO:0000250"/>
    <property type="project" value="UniProtKB"/>
</dbReference>
<dbReference type="GO" id="GO:0008286">
    <property type="term" value="P:insulin receptor signaling pathway"/>
    <property type="evidence" value="ECO:0007669"/>
    <property type="project" value="TreeGrafter"/>
</dbReference>
<dbReference type="GO" id="GO:0007005">
    <property type="term" value="P:mitochondrion organization"/>
    <property type="evidence" value="ECO:0000250"/>
    <property type="project" value="UniProtKB"/>
</dbReference>
<dbReference type="GO" id="GO:0001937">
    <property type="term" value="P:negative regulation of endothelial cell proliferation"/>
    <property type="evidence" value="ECO:0000250"/>
    <property type="project" value="UniProtKB"/>
</dbReference>
<dbReference type="GO" id="GO:0060161">
    <property type="term" value="P:positive regulation of dopamine receptor signaling pathway"/>
    <property type="evidence" value="ECO:0000250"/>
    <property type="project" value="UniProtKB"/>
</dbReference>
<dbReference type="GO" id="GO:0051480">
    <property type="term" value="P:regulation of cytosolic calcium ion concentration"/>
    <property type="evidence" value="ECO:0007669"/>
    <property type="project" value="TreeGrafter"/>
</dbReference>
<dbReference type="GO" id="GO:0048741">
    <property type="term" value="P:skeletal muscle fiber development"/>
    <property type="evidence" value="ECO:0000250"/>
    <property type="project" value="UniProtKB"/>
</dbReference>
<dbReference type="GO" id="GO:0048278">
    <property type="term" value="P:vesicle docking"/>
    <property type="evidence" value="ECO:0000250"/>
    <property type="project" value="UniProtKB"/>
</dbReference>
<dbReference type="GO" id="GO:0006906">
    <property type="term" value="P:vesicle fusion"/>
    <property type="evidence" value="ECO:0000250"/>
    <property type="project" value="UniProtKB"/>
</dbReference>
<dbReference type="InterPro" id="IPR001612">
    <property type="entry name" value="Caveolin"/>
</dbReference>
<dbReference type="PANTHER" id="PTHR10844">
    <property type="entry name" value="CAVEOLIN"/>
    <property type="match status" value="1"/>
</dbReference>
<dbReference type="PANTHER" id="PTHR10844:SF3">
    <property type="entry name" value="CAVEOLIN-2"/>
    <property type="match status" value="1"/>
</dbReference>
<dbReference type="Pfam" id="PF01146">
    <property type="entry name" value="Caveolin"/>
    <property type="match status" value="1"/>
</dbReference>
<proteinExistence type="inferred from homology"/>
<evidence type="ECO:0000250" key="1"/>
<evidence type="ECO:0000250" key="2">
    <source>
        <dbReference type="UniProtKB" id="P51636"/>
    </source>
</evidence>
<evidence type="ECO:0000250" key="3">
    <source>
        <dbReference type="UniProtKB" id="Q9WVC3"/>
    </source>
</evidence>
<evidence type="ECO:0000255" key="4"/>
<evidence type="ECO:0000256" key="5">
    <source>
        <dbReference type="SAM" id="MobiDB-lite"/>
    </source>
</evidence>
<evidence type="ECO:0000305" key="6"/>
<accession>Q2QL80</accession>
<protein>
    <recommendedName>
        <fullName>Caveolin-2</fullName>
    </recommendedName>
</protein>
<reference key="1">
    <citation type="submission" date="2005-11" db="EMBL/GenBank/DDBJ databases">
        <title>NISC comparative sequencing initiative.</title>
        <authorList>
            <person name="Antonellis A."/>
            <person name="Ayele K."/>
            <person name="Benjamin B."/>
            <person name="Blakesley R.W."/>
            <person name="Boakye A."/>
            <person name="Bouffard G.G."/>
            <person name="Brinkley C."/>
            <person name="Brooks S."/>
            <person name="Chu G."/>
            <person name="Coleman H."/>
            <person name="Engle J."/>
            <person name="Gestole M."/>
            <person name="Greene A."/>
            <person name="Guan X."/>
            <person name="Gupta J."/>
            <person name="Haghighi P."/>
            <person name="Han J."/>
            <person name="Hansen N."/>
            <person name="Ho S.-L."/>
            <person name="Hu P."/>
            <person name="Hunter G."/>
            <person name="Hurle B."/>
            <person name="Idol J.R."/>
            <person name="Kwong P."/>
            <person name="Laric P."/>
            <person name="Larson S."/>
            <person name="Lee-Lin S.-Q."/>
            <person name="Legaspi R."/>
            <person name="Madden M."/>
            <person name="Maduro Q.L."/>
            <person name="Maduro V.B."/>
            <person name="Margulies E.H."/>
            <person name="Masiello C."/>
            <person name="Maskeri B."/>
            <person name="McDowell J."/>
            <person name="Mojidi H.A."/>
            <person name="Mullikin J.C."/>
            <person name="Oestreicher J.S."/>
            <person name="Park M."/>
            <person name="Portnoy M.E."/>
            <person name="Prasad A."/>
            <person name="Puri O."/>
            <person name="Reddix-Dugue N."/>
            <person name="Schandler K."/>
            <person name="Schueler M.G."/>
            <person name="Sison C."/>
            <person name="Stantripop S."/>
            <person name="Stephen E."/>
            <person name="Taye A."/>
            <person name="Thomas J.W."/>
            <person name="Thomas P.J."/>
            <person name="Tsipouri V."/>
            <person name="Ung L."/>
            <person name="Vogt J.L."/>
            <person name="Wetherby K.D."/>
            <person name="Young A."/>
            <person name="Green E.D."/>
        </authorList>
    </citation>
    <scope>NUCLEOTIDE SEQUENCE [LARGE SCALE GENOMIC DNA]</scope>
</reference>
<feature type="chain" id="PRO_0000226339" description="Caveolin-2">
    <location>
        <begin position="1"/>
        <end position="162"/>
    </location>
</feature>
<feature type="topological domain" description="Cytoplasmic" evidence="4">
    <location>
        <begin position="1"/>
        <end position="86"/>
    </location>
</feature>
<feature type="intramembrane region" description="Helical" evidence="4">
    <location>
        <begin position="87"/>
        <end position="107"/>
    </location>
</feature>
<feature type="topological domain" description="Cytoplasmic" evidence="4">
    <location>
        <begin position="108"/>
        <end position="162"/>
    </location>
</feature>
<feature type="region of interest" description="Disordered" evidence="5">
    <location>
        <begin position="19"/>
        <end position="40"/>
    </location>
</feature>
<feature type="compositionally biased region" description="Basic and acidic residues" evidence="5">
    <location>
        <begin position="29"/>
        <end position="40"/>
    </location>
</feature>
<feature type="modified residue" description="Phosphotyrosine; by SRC" evidence="2">
    <location>
        <position position="19"/>
    </location>
</feature>
<feature type="modified residue" description="Phosphoserine" evidence="3">
    <location>
        <position position="20"/>
    </location>
</feature>
<feature type="modified residue" description="Phosphoserine" evidence="2">
    <location>
        <position position="23"/>
    </location>
</feature>
<feature type="modified residue" description="Phosphotyrosine; by SRC" evidence="2">
    <location>
        <position position="27"/>
    </location>
</feature>
<feature type="modified residue" description="Phosphoserine" evidence="2">
    <location>
        <position position="36"/>
    </location>
</feature>
<keyword id="KW-1003">Cell membrane</keyword>
<keyword id="KW-0963">Cytoplasm</keyword>
<keyword id="KW-0333">Golgi apparatus</keyword>
<keyword id="KW-0472">Membrane</keyword>
<keyword id="KW-0539">Nucleus</keyword>
<keyword id="KW-0597">Phosphoprotein</keyword>
<gene>
    <name type="primary">CAV2</name>
</gene>
<name>CAV2_DIDVI</name>